<sequence>MLFDELISEFDRGLRSIAGVSRMSRPVPQPAAAAPAELSAAERKHAAGLMRVNHVGEVCAQALYQAQKFATSSSELKEMFEHAAREEEDHLAWTAHRLKDLDSRPSLLNPLWYAGALAIGVVAGRLGDKVSLGFMAETERQVESHLDSHLSELPAADVESRAIVEQMRADEVKHGKTATDAGGIELPMPARMLMRAASKVMTSTAYYL</sequence>
<accession>Q2SZJ3</accession>
<feature type="chain" id="PRO_0000338675" description="3-demethoxyubiquinol 3-hydroxylase">
    <location>
        <begin position="1"/>
        <end position="208"/>
    </location>
</feature>
<feature type="binding site" evidence="1">
    <location>
        <position position="57"/>
    </location>
    <ligand>
        <name>Fe cation</name>
        <dbReference type="ChEBI" id="CHEBI:24875"/>
        <label>1</label>
    </ligand>
</feature>
<feature type="binding site" evidence="1">
    <location>
        <position position="87"/>
    </location>
    <ligand>
        <name>Fe cation</name>
        <dbReference type="ChEBI" id="CHEBI:24875"/>
        <label>1</label>
    </ligand>
</feature>
<feature type="binding site" evidence="1">
    <location>
        <position position="87"/>
    </location>
    <ligand>
        <name>Fe cation</name>
        <dbReference type="ChEBI" id="CHEBI:24875"/>
        <label>2</label>
    </ligand>
</feature>
<feature type="binding site" evidence="1">
    <location>
        <position position="90"/>
    </location>
    <ligand>
        <name>Fe cation</name>
        <dbReference type="ChEBI" id="CHEBI:24875"/>
        <label>1</label>
    </ligand>
</feature>
<feature type="binding site" evidence="1">
    <location>
        <position position="139"/>
    </location>
    <ligand>
        <name>Fe cation</name>
        <dbReference type="ChEBI" id="CHEBI:24875"/>
        <label>2</label>
    </ligand>
</feature>
<feature type="binding site" evidence="1">
    <location>
        <position position="171"/>
    </location>
    <ligand>
        <name>Fe cation</name>
        <dbReference type="ChEBI" id="CHEBI:24875"/>
        <label>1</label>
    </ligand>
</feature>
<feature type="binding site" evidence="1">
    <location>
        <position position="171"/>
    </location>
    <ligand>
        <name>Fe cation</name>
        <dbReference type="ChEBI" id="CHEBI:24875"/>
        <label>2</label>
    </ligand>
</feature>
<feature type="binding site" evidence="1">
    <location>
        <position position="174"/>
    </location>
    <ligand>
        <name>Fe cation</name>
        <dbReference type="ChEBI" id="CHEBI:24875"/>
        <label>2</label>
    </ligand>
</feature>
<proteinExistence type="inferred from homology"/>
<comment type="function">
    <text evidence="1">Catalyzes the hydroxylation of 2-nonaprenyl-3-methyl-6-methoxy-1,4-benzoquinol during ubiquinone biosynthesis.</text>
</comment>
<comment type="catalytic activity">
    <reaction evidence="1">
        <text>a 5-methoxy-2-methyl-3-(all-trans-polyprenyl)benzene-1,4-diol + AH2 + O2 = a 3-demethylubiquinol + A + H2O</text>
        <dbReference type="Rhea" id="RHEA:50908"/>
        <dbReference type="Rhea" id="RHEA-COMP:10859"/>
        <dbReference type="Rhea" id="RHEA-COMP:10914"/>
        <dbReference type="ChEBI" id="CHEBI:13193"/>
        <dbReference type="ChEBI" id="CHEBI:15377"/>
        <dbReference type="ChEBI" id="CHEBI:15379"/>
        <dbReference type="ChEBI" id="CHEBI:17499"/>
        <dbReference type="ChEBI" id="CHEBI:84167"/>
        <dbReference type="ChEBI" id="CHEBI:84422"/>
        <dbReference type="EC" id="1.14.99.60"/>
    </reaction>
</comment>
<comment type="cofactor">
    <cofactor evidence="1">
        <name>Fe cation</name>
        <dbReference type="ChEBI" id="CHEBI:24875"/>
    </cofactor>
    <text evidence="1">Binds 2 iron ions per subunit.</text>
</comment>
<comment type="pathway">
    <text evidence="1">Cofactor biosynthesis; ubiquinone biosynthesis.</text>
</comment>
<comment type="subcellular location">
    <subcellularLocation>
        <location evidence="1">Cell membrane</location>
        <topology evidence="1">Peripheral membrane protein</topology>
    </subcellularLocation>
</comment>
<comment type="similarity">
    <text evidence="1">Belongs to the COQ7 family.</text>
</comment>
<comment type="sequence caution" evidence="2">
    <conflict type="erroneous initiation">
        <sequence resource="EMBL-CDS" id="ABC38061"/>
    </conflict>
</comment>
<organism>
    <name type="scientific">Burkholderia thailandensis (strain ATCC 700388 / DSM 13276 / CCUG 48851 / CIP 106301 / E264)</name>
    <dbReference type="NCBI Taxonomy" id="271848"/>
    <lineage>
        <taxon>Bacteria</taxon>
        <taxon>Pseudomonadati</taxon>
        <taxon>Pseudomonadota</taxon>
        <taxon>Betaproteobacteria</taxon>
        <taxon>Burkholderiales</taxon>
        <taxon>Burkholderiaceae</taxon>
        <taxon>Burkholderia</taxon>
        <taxon>pseudomallei group</taxon>
    </lineage>
</organism>
<name>COQ7_BURTA</name>
<protein>
    <recommendedName>
        <fullName evidence="1">3-demethoxyubiquinol 3-hydroxylase</fullName>
        <shortName evidence="1">DMQ hydroxylase</shortName>
        <ecNumber evidence="1">1.14.99.60</ecNumber>
    </recommendedName>
    <alternativeName>
        <fullName evidence="1">2-nonaprenyl-3-methyl-6-methoxy-1,4-benzoquinol hydroxylase</fullName>
    </alternativeName>
</protein>
<evidence type="ECO:0000255" key="1">
    <source>
        <dbReference type="HAMAP-Rule" id="MF_01658"/>
    </source>
</evidence>
<evidence type="ECO:0000305" key="2"/>
<keyword id="KW-1003">Cell membrane</keyword>
<keyword id="KW-0408">Iron</keyword>
<keyword id="KW-0472">Membrane</keyword>
<keyword id="KW-0479">Metal-binding</keyword>
<keyword id="KW-0503">Monooxygenase</keyword>
<keyword id="KW-0560">Oxidoreductase</keyword>
<keyword id="KW-0831">Ubiquinone biosynthesis</keyword>
<reference key="1">
    <citation type="journal article" date="2005" name="BMC Genomics">
        <title>Bacterial genome adaptation to niches: divergence of the potential virulence genes in three Burkholderia species of different survival strategies.</title>
        <authorList>
            <person name="Kim H.S."/>
            <person name="Schell M.A."/>
            <person name="Yu Y."/>
            <person name="Ulrich R.L."/>
            <person name="Sarria S.H."/>
            <person name="Nierman W.C."/>
            <person name="DeShazer D."/>
        </authorList>
    </citation>
    <scope>NUCLEOTIDE SEQUENCE [LARGE SCALE GENOMIC DNA]</scope>
    <source>
        <strain>ATCC 700388 / DSM 13276 / CCUG 48851 / CIP 106301 / E264</strain>
    </source>
</reference>
<gene>
    <name evidence="1" type="primary">coq7</name>
    <name type="ordered locus">BTH_I1108</name>
</gene>
<dbReference type="EC" id="1.14.99.60" evidence="1"/>
<dbReference type="EMBL" id="CP000086">
    <property type="protein sequence ID" value="ABC38061.1"/>
    <property type="status" value="ALT_INIT"/>
    <property type="molecule type" value="Genomic_DNA"/>
</dbReference>
<dbReference type="RefSeq" id="WP_009888740.1">
    <property type="nucleotide sequence ID" value="NZ_CP008785.1"/>
</dbReference>
<dbReference type="SMR" id="Q2SZJ3"/>
<dbReference type="GeneID" id="45120860"/>
<dbReference type="KEGG" id="bte:BTH_I1108"/>
<dbReference type="HOGENOM" id="CLU_088601_0_0_4"/>
<dbReference type="UniPathway" id="UPA00232"/>
<dbReference type="Proteomes" id="UP000001930">
    <property type="component" value="Chromosome I"/>
</dbReference>
<dbReference type="GO" id="GO:0005886">
    <property type="term" value="C:plasma membrane"/>
    <property type="evidence" value="ECO:0007669"/>
    <property type="project" value="UniProtKB-SubCell"/>
</dbReference>
<dbReference type="GO" id="GO:0008682">
    <property type="term" value="F:3-demethoxyubiquinol 3-hydroxylase activity"/>
    <property type="evidence" value="ECO:0007669"/>
    <property type="project" value="UniProtKB-EC"/>
</dbReference>
<dbReference type="GO" id="GO:0046872">
    <property type="term" value="F:metal ion binding"/>
    <property type="evidence" value="ECO:0007669"/>
    <property type="project" value="UniProtKB-KW"/>
</dbReference>
<dbReference type="GO" id="GO:0006744">
    <property type="term" value="P:ubiquinone biosynthetic process"/>
    <property type="evidence" value="ECO:0007669"/>
    <property type="project" value="UniProtKB-UniRule"/>
</dbReference>
<dbReference type="CDD" id="cd01042">
    <property type="entry name" value="DMQH"/>
    <property type="match status" value="1"/>
</dbReference>
<dbReference type="Gene3D" id="1.20.1260.10">
    <property type="match status" value="1"/>
</dbReference>
<dbReference type="HAMAP" id="MF_01658">
    <property type="entry name" value="COQ7"/>
    <property type="match status" value="1"/>
</dbReference>
<dbReference type="InterPro" id="IPR047809">
    <property type="entry name" value="COQ7_proteobact"/>
</dbReference>
<dbReference type="InterPro" id="IPR012347">
    <property type="entry name" value="Ferritin-like"/>
</dbReference>
<dbReference type="InterPro" id="IPR009078">
    <property type="entry name" value="Ferritin-like_SF"/>
</dbReference>
<dbReference type="InterPro" id="IPR011566">
    <property type="entry name" value="Ubq_synth_Coq7"/>
</dbReference>
<dbReference type="NCBIfam" id="NF033656">
    <property type="entry name" value="DMQ_monoox_COQ7"/>
    <property type="match status" value="1"/>
</dbReference>
<dbReference type="PANTHER" id="PTHR11237:SF4">
    <property type="entry name" value="5-DEMETHOXYUBIQUINONE HYDROXYLASE, MITOCHONDRIAL"/>
    <property type="match status" value="1"/>
</dbReference>
<dbReference type="PANTHER" id="PTHR11237">
    <property type="entry name" value="COENZYME Q10 BIOSYNTHESIS PROTEIN 7"/>
    <property type="match status" value="1"/>
</dbReference>
<dbReference type="Pfam" id="PF03232">
    <property type="entry name" value="COQ7"/>
    <property type="match status" value="1"/>
</dbReference>
<dbReference type="SUPFAM" id="SSF47240">
    <property type="entry name" value="Ferritin-like"/>
    <property type="match status" value="1"/>
</dbReference>